<reference key="1">
    <citation type="submission" date="2008-06" db="EMBL/GenBank/DDBJ databases">
        <title>Complete sequence of Stenotrophomonas maltophilia R551-3.</title>
        <authorList>
            <consortium name="US DOE Joint Genome Institute"/>
            <person name="Lucas S."/>
            <person name="Copeland A."/>
            <person name="Lapidus A."/>
            <person name="Glavina del Rio T."/>
            <person name="Dalin E."/>
            <person name="Tice H."/>
            <person name="Pitluck S."/>
            <person name="Chain P."/>
            <person name="Malfatti S."/>
            <person name="Shin M."/>
            <person name="Vergez L."/>
            <person name="Lang D."/>
            <person name="Schmutz J."/>
            <person name="Larimer F."/>
            <person name="Land M."/>
            <person name="Hauser L."/>
            <person name="Kyrpides N."/>
            <person name="Mikhailova N."/>
            <person name="Taghavi S."/>
            <person name="Monchy S."/>
            <person name="Newman L."/>
            <person name="Vangronsveld J."/>
            <person name="van der Lelie D."/>
            <person name="Richardson P."/>
        </authorList>
    </citation>
    <scope>NUCLEOTIDE SEQUENCE [LARGE SCALE GENOMIC DNA]</scope>
    <source>
        <strain>R551-3</strain>
    </source>
</reference>
<organism>
    <name type="scientific">Stenotrophomonas maltophilia (strain R551-3)</name>
    <dbReference type="NCBI Taxonomy" id="391008"/>
    <lineage>
        <taxon>Bacteria</taxon>
        <taxon>Pseudomonadati</taxon>
        <taxon>Pseudomonadota</taxon>
        <taxon>Gammaproteobacteria</taxon>
        <taxon>Lysobacterales</taxon>
        <taxon>Lysobacteraceae</taxon>
        <taxon>Stenotrophomonas</taxon>
        <taxon>Stenotrophomonas maltophilia group</taxon>
    </lineage>
</organism>
<keyword id="KW-0963">Cytoplasm</keyword>
<keyword id="KW-0690">Ribosome biogenesis</keyword>
<name>RIMP_STRM5</name>
<sequence>MSDKATDIANLLAPTVVSLGLELLGVEYLPAPGGATLRLYIDVPLAEQPERIINVDDCERVSREVSAQMDVEDPISGNYTLEVSSPGVDRPLFNLEQFGRHLGESAKVTLKLPQDNRRRLQGRIEAIDEAAGAITFIVDKAEVVVSADNIDKARIMPDWVALGLAPSKPTGPAPKRPKPKTNSSSNEPAAKKPRAE</sequence>
<accession>B4SQS2</accession>
<comment type="function">
    <text evidence="1">Required for maturation of 30S ribosomal subunits.</text>
</comment>
<comment type="subcellular location">
    <subcellularLocation>
        <location evidence="1">Cytoplasm</location>
    </subcellularLocation>
</comment>
<comment type="similarity">
    <text evidence="1">Belongs to the RimP family.</text>
</comment>
<proteinExistence type="inferred from homology"/>
<feature type="chain" id="PRO_1000136796" description="Ribosome maturation factor RimP">
    <location>
        <begin position="1"/>
        <end position="196"/>
    </location>
</feature>
<feature type="region of interest" description="Disordered" evidence="2">
    <location>
        <begin position="163"/>
        <end position="196"/>
    </location>
</feature>
<dbReference type="EMBL" id="CP001111">
    <property type="protein sequence ID" value="ACF52517.1"/>
    <property type="molecule type" value="Genomic_DNA"/>
</dbReference>
<dbReference type="RefSeq" id="WP_006381060.1">
    <property type="nucleotide sequence ID" value="NC_011071.1"/>
</dbReference>
<dbReference type="SMR" id="B4SQS2"/>
<dbReference type="STRING" id="391008.Smal_2817"/>
<dbReference type="KEGG" id="smt:Smal_2817"/>
<dbReference type="eggNOG" id="COG0779">
    <property type="taxonomic scope" value="Bacteria"/>
</dbReference>
<dbReference type="HOGENOM" id="CLU_070525_1_1_6"/>
<dbReference type="OrthoDB" id="9805006at2"/>
<dbReference type="Proteomes" id="UP000001867">
    <property type="component" value="Chromosome"/>
</dbReference>
<dbReference type="GO" id="GO:0005829">
    <property type="term" value="C:cytosol"/>
    <property type="evidence" value="ECO:0007669"/>
    <property type="project" value="TreeGrafter"/>
</dbReference>
<dbReference type="GO" id="GO:0000028">
    <property type="term" value="P:ribosomal small subunit assembly"/>
    <property type="evidence" value="ECO:0007669"/>
    <property type="project" value="TreeGrafter"/>
</dbReference>
<dbReference type="GO" id="GO:0006412">
    <property type="term" value="P:translation"/>
    <property type="evidence" value="ECO:0007669"/>
    <property type="project" value="TreeGrafter"/>
</dbReference>
<dbReference type="CDD" id="cd01734">
    <property type="entry name" value="YlxS_C"/>
    <property type="match status" value="1"/>
</dbReference>
<dbReference type="FunFam" id="3.30.300.70:FF:000001">
    <property type="entry name" value="Ribosome maturation factor RimP"/>
    <property type="match status" value="1"/>
</dbReference>
<dbReference type="Gene3D" id="2.30.30.180">
    <property type="entry name" value="Ribosome maturation factor RimP, C-terminal domain"/>
    <property type="match status" value="1"/>
</dbReference>
<dbReference type="Gene3D" id="3.30.300.70">
    <property type="entry name" value="RimP-like superfamily, N-terminal"/>
    <property type="match status" value="1"/>
</dbReference>
<dbReference type="HAMAP" id="MF_01077">
    <property type="entry name" value="RimP"/>
    <property type="match status" value="1"/>
</dbReference>
<dbReference type="InterPro" id="IPR003728">
    <property type="entry name" value="Ribosome_maturation_RimP"/>
</dbReference>
<dbReference type="InterPro" id="IPR028998">
    <property type="entry name" value="RimP_C"/>
</dbReference>
<dbReference type="InterPro" id="IPR036847">
    <property type="entry name" value="RimP_C_sf"/>
</dbReference>
<dbReference type="InterPro" id="IPR028989">
    <property type="entry name" value="RimP_N"/>
</dbReference>
<dbReference type="InterPro" id="IPR035956">
    <property type="entry name" value="RimP_N_sf"/>
</dbReference>
<dbReference type="NCBIfam" id="NF000931">
    <property type="entry name" value="PRK00092.2-3"/>
    <property type="match status" value="1"/>
</dbReference>
<dbReference type="PANTHER" id="PTHR33867">
    <property type="entry name" value="RIBOSOME MATURATION FACTOR RIMP"/>
    <property type="match status" value="1"/>
</dbReference>
<dbReference type="PANTHER" id="PTHR33867:SF1">
    <property type="entry name" value="RIBOSOME MATURATION FACTOR RIMP"/>
    <property type="match status" value="1"/>
</dbReference>
<dbReference type="Pfam" id="PF17384">
    <property type="entry name" value="DUF150_C"/>
    <property type="match status" value="1"/>
</dbReference>
<dbReference type="Pfam" id="PF02576">
    <property type="entry name" value="RimP_N"/>
    <property type="match status" value="1"/>
</dbReference>
<dbReference type="SUPFAM" id="SSF74942">
    <property type="entry name" value="YhbC-like, C-terminal domain"/>
    <property type="match status" value="1"/>
</dbReference>
<dbReference type="SUPFAM" id="SSF75420">
    <property type="entry name" value="YhbC-like, N-terminal domain"/>
    <property type="match status" value="1"/>
</dbReference>
<evidence type="ECO:0000255" key="1">
    <source>
        <dbReference type="HAMAP-Rule" id="MF_01077"/>
    </source>
</evidence>
<evidence type="ECO:0000256" key="2">
    <source>
        <dbReference type="SAM" id="MobiDB-lite"/>
    </source>
</evidence>
<gene>
    <name evidence="1" type="primary">rimP</name>
    <name type="ordered locus">Smal_2817</name>
</gene>
<protein>
    <recommendedName>
        <fullName evidence="1">Ribosome maturation factor RimP</fullName>
    </recommendedName>
</protein>